<comment type="function">
    <text evidence="1">Catalyzes the initial step of the lipid cycle reactions in the biosynthesis of the cell wall peptidoglycan: transfers peptidoglycan precursor phospho-MurNAc-pentapeptide from UDP-MurNAc-pentapeptide onto the lipid carrier undecaprenyl phosphate, yielding undecaprenyl-pyrophosphoryl-MurNAc-pentapeptide, known as lipid I.</text>
</comment>
<comment type="catalytic activity">
    <reaction evidence="1">
        <text>UDP-N-acetyl-alpha-D-muramoyl-L-alanyl-gamma-D-glutamyl-meso-2,6-diaminopimeloyl-D-alanyl-D-alanine + di-trans,octa-cis-undecaprenyl phosphate = di-trans,octa-cis-undecaprenyl diphospho-N-acetyl-alpha-D-muramoyl-L-alanyl-D-glutamyl-meso-2,6-diaminopimeloyl-D-alanyl-D-alanine + UMP</text>
        <dbReference type="Rhea" id="RHEA:28386"/>
        <dbReference type="ChEBI" id="CHEBI:57865"/>
        <dbReference type="ChEBI" id="CHEBI:60392"/>
        <dbReference type="ChEBI" id="CHEBI:61386"/>
        <dbReference type="ChEBI" id="CHEBI:61387"/>
        <dbReference type="EC" id="2.7.8.13"/>
    </reaction>
</comment>
<comment type="cofactor">
    <cofactor evidence="1">
        <name>Mg(2+)</name>
        <dbReference type="ChEBI" id="CHEBI:18420"/>
    </cofactor>
</comment>
<comment type="pathway">
    <text evidence="1">Cell wall biogenesis; peptidoglycan biosynthesis.</text>
</comment>
<comment type="subcellular location">
    <subcellularLocation>
        <location evidence="1">Cell inner membrane</location>
        <topology evidence="1">Multi-pass membrane protein</topology>
    </subcellularLocation>
</comment>
<comment type="similarity">
    <text evidence="1">Belongs to the glycosyltransferase 4 family. MraY subfamily.</text>
</comment>
<reference key="1">
    <citation type="journal article" date="2003" name="Nature">
        <title>Genome divergence in two Prochlorococcus ecotypes reflects oceanic niche differentiation.</title>
        <authorList>
            <person name="Rocap G."/>
            <person name="Larimer F.W."/>
            <person name="Lamerdin J.E."/>
            <person name="Malfatti S."/>
            <person name="Chain P."/>
            <person name="Ahlgren N.A."/>
            <person name="Arellano A."/>
            <person name="Coleman M."/>
            <person name="Hauser L."/>
            <person name="Hess W.R."/>
            <person name="Johnson Z.I."/>
            <person name="Land M.L."/>
            <person name="Lindell D."/>
            <person name="Post A.F."/>
            <person name="Regala W."/>
            <person name="Shah M."/>
            <person name="Shaw S.L."/>
            <person name="Steglich C."/>
            <person name="Sullivan M.B."/>
            <person name="Ting C.S."/>
            <person name="Tolonen A."/>
            <person name="Webb E.A."/>
            <person name="Zinser E.R."/>
            <person name="Chisholm S.W."/>
        </authorList>
    </citation>
    <scope>NUCLEOTIDE SEQUENCE [LARGE SCALE GENOMIC DNA]</scope>
    <source>
        <strain>MIT 9313</strain>
    </source>
</reference>
<name>MRAY_PROMM</name>
<evidence type="ECO:0000255" key="1">
    <source>
        <dbReference type="HAMAP-Rule" id="MF_00038"/>
    </source>
</evidence>
<proteinExistence type="inferred from homology"/>
<dbReference type="EC" id="2.7.8.13" evidence="1"/>
<dbReference type="EMBL" id="BX548175">
    <property type="protein sequence ID" value="CAE22438.1"/>
    <property type="molecule type" value="Genomic_DNA"/>
</dbReference>
<dbReference type="RefSeq" id="WP_011131628.1">
    <property type="nucleotide sequence ID" value="NC_005071.1"/>
</dbReference>
<dbReference type="SMR" id="Q7V3S7"/>
<dbReference type="KEGG" id="pmt:PMT_2264"/>
<dbReference type="eggNOG" id="COG0472">
    <property type="taxonomic scope" value="Bacteria"/>
</dbReference>
<dbReference type="HOGENOM" id="CLU_023982_0_2_3"/>
<dbReference type="OrthoDB" id="9805475at2"/>
<dbReference type="UniPathway" id="UPA00219"/>
<dbReference type="Proteomes" id="UP000001423">
    <property type="component" value="Chromosome"/>
</dbReference>
<dbReference type="GO" id="GO:0005886">
    <property type="term" value="C:plasma membrane"/>
    <property type="evidence" value="ECO:0007669"/>
    <property type="project" value="UniProtKB-SubCell"/>
</dbReference>
<dbReference type="GO" id="GO:0046872">
    <property type="term" value="F:metal ion binding"/>
    <property type="evidence" value="ECO:0007669"/>
    <property type="project" value="UniProtKB-KW"/>
</dbReference>
<dbReference type="GO" id="GO:0008963">
    <property type="term" value="F:phospho-N-acetylmuramoyl-pentapeptide-transferase activity"/>
    <property type="evidence" value="ECO:0007669"/>
    <property type="project" value="UniProtKB-UniRule"/>
</dbReference>
<dbReference type="GO" id="GO:0051992">
    <property type="term" value="F:UDP-N-acetylmuramoyl-L-alanyl-D-glutamyl-meso-2,6-diaminopimelyl-D-alanyl-D-alanine:undecaprenyl-phosphate transferase activity"/>
    <property type="evidence" value="ECO:0007669"/>
    <property type="project" value="RHEA"/>
</dbReference>
<dbReference type="GO" id="GO:0051301">
    <property type="term" value="P:cell division"/>
    <property type="evidence" value="ECO:0007669"/>
    <property type="project" value="UniProtKB-KW"/>
</dbReference>
<dbReference type="GO" id="GO:0071555">
    <property type="term" value="P:cell wall organization"/>
    <property type="evidence" value="ECO:0007669"/>
    <property type="project" value="UniProtKB-KW"/>
</dbReference>
<dbReference type="GO" id="GO:0009252">
    <property type="term" value="P:peptidoglycan biosynthetic process"/>
    <property type="evidence" value="ECO:0007669"/>
    <property type="project" value="UniProtKB-UniRule"/>
</dbReference>
<dbReference type="GO" id="GO:0008360">
    <property type="term" value="P:regulation of cell shape"/>
    <property type="evidence" value="ECO:0007669"/>
    <property type="project" value="UniProtKB-KW"/>
</dbReference>
<dbReference type="CDD" id="cd06852">
    <property type="entry name" value="GT_MraY"/>
    <property type="match status" value="1"/>
</dbReference>
<dbReference type="HAMAP" id="MF_00038">
    <property type="entry name" value="MraY"/>
    <property type="match status" value="1"/>
</dbReference>
<dbReference type="InterPro" id="IPR000715">
    <property type="entry name" value="Glycosyl_transferase_4"/>
</dbReference>
<dbReference type="InterPro" id="IPR003524">
    <property type="entry name" value="PNAcMuramoyl-5peptid_Trfase"/>
</dbReference>
<dbReference type="InterPro" id="IPR018480">
    <property type="entry name" value="PNAcMuramoyl-5peptid_Trfase_CS"/>
</dbReference>
<dbReference type="NCBIfam" id="TIGR00445">
    <property type="entry name" value="mraY"/>
    <property type="match status" value="1"/>
</dbReference>
<dbReference type="PANTHER" id="PTHR22926">
    <property type="entry name" value="PHOSPHO-N-ACETYLMURAMOYL-PENTAPEPTIDE-TRANSFERASE"/>
    <property type="match status" value="1"/>
</dbReference>
<dbReference type="PANTHER" id="PTHR22926:SF5">
    <property type="entry name" value="PHOSPHO-N-ACETYLMURAMOYL-PENTAPEPTIDE-TRANSFERASE HOMOLOG"/>
    <property type="match status" value="1"/>
</dbReference>
<dbReference type="Pfam" id="PF00953">
    <property type="entry name" value="Glycos_transf_4"/>
    <property type="match status" value="1"/>
</dbReference>
<dbReference type="Pfam" id="PF10555">
    <property type="entry name" value="MraY_sig1"/>
    <property type="match status" value="1"/>
</dbReference>
<dbReference type="PROSITE" id="PS01347">
    <property type="entry name" value="MRAY_1"/>
    <property type="match status" value="1"/>
</dbReference>
<dbReference type="PROSITE" id="PS01348">
    <property type="entry name" value="MRAY_2"/>
    <property type="match status" value="1"/>
</dbReference>
<protein>
    <recommendedName>
        <fullName evidence="1">Phospho-N-acetylmuramoyl-pentapeptide-transferase</fullName>
        <ecNumber evidence="1">2.7.8.13</ecNumber>
    </recommendedName>
    <alternativeName>
        <fullName evidence="1">UDP-MurNAc-pentapeptide phosphotransferase</fullName>
    </alternativeName>
</protein>
<organism>
    <name type="scientific">Prochlorococcus marinus (strain MIT 9313)</name>
    <dbReference type="NCBI Taxonomy" id="74547"/>
    <lineage>
        <taxon>Bacteria</taxon>
        <taxon>Bacillati</taxon>
        <taxon>Cyanobacteriota</taxon>
        <taxon>Cyanophyceae</taxon>
        <taxon>Synechococcales</taxon>
        <taxon>Prochlorococcaceae</taxon>
        <taxon>Prochlorococcus</taxon>
    </lineage>
</organism>
<accession>Q7V3S7</accession>
<gene>
    <name evidence="1" type="primary">mraY</name>
    <name type="ordered locus">PMT_2264</name>
</gene>
<keyword id="KW-0131">Cell cycle</keyword>
<keyword id="KW-0132">Cell division</keyword>
<keyword id="KW-0997">Cell inner membrane</keyword>
<keyword id="KW-1003">Cell membrane</keyword>
<keyword id="KW-0133">Cell shape</keyword>
<keyword id="KW-0961">Cell wall biogenesis/degradation</keyword>
<keyword id="KW-0460">Magnesium</keyword>
<keyword id="KW-0472">Membrane</keyword>
<keyword id="KW-0479">Metal-binding</keyword>
<keyword id="KW-0573">Peptidoglycan synthesis</keyword>
<keyword id="KW-1185">Reference proteome</keyword>
<keyword id="KW-0808">Transferase</keyword>
<keyword id="KW-0812">Transmembrane</keyword>
<keyword id="KW-1133">Transmembrane helix</keyword>
<feature type="chain" id="PRO_0000108869" description="Phospho-N-acetylmuramoyl-pentapeptide-transferase">
    <location>
        <begin position="1"/>
        <end position="373"/>
    </location>
</feature>
<feature type="transmembrane region" description="Helical" evidence="1">
    <location>
        <begin position="16"/>
        <end position="36"/>
    </location>
</feature>
<feature type="transmembrane region" description="Helical" evidence="1">
    <location>
        <begin position="46"/>
        <end position="66"/>
    </location>
</feature>
<feature type="transmembrane region" description="Helical" evidence="1">
    <location>
        <begin position="93"/>
        <end position="113"/>
    </location>
</feature>
<feature type="transmembrane region" description="Helical" evidence="1">
    <location>
        <begin position="120"/>
        <end position="140"/>
    </location>
</feature>
<feature type="transmembrane region" description="Helical" evidence="1">
    <location>
        <begin position="157"/>
        <end position="177"/>
    </location>
</feature>
<feature type="transmembrane region" description="Helical" evidence="1">
    <location>
        <begin position="185"/>
        <end position="205"/>
    </location>
</feature>
<feature type="transmembrane region" description="Helical" evidence="1">
    <location>
        <begin position="216"/>
        <end position="236"/>
    </location>
</feature>
<feature type="transmembrane region" description="Helical" evidence="1">
    <location>
        <begin position="242"/>
        <end position="262"/>
    </location>
</feature>
<feature type="transmembrane region" description="Helical" evidence="1">
    <location>
        <begin position="270"/>
        <end position="290"/>
    </location>
</feature>
<feature type="transmembrane region" description="Helical" evidence="1">
    <location>
        <begin position="298"/>
        <end position="318"/>
    </location>
</feature>
<feature type="transmembrane region" description="Helical" evidence="1">
    <location>
        <begin position="350"/>
        <end position="369"/>
    </location>
</feature>
<sequence length="373" mass="39827">MSNSPKPLADTDTQSWWTKGSTSASLLGIVIFAASFTSDRFIANSLLSLPLMISTLISVLIASWGIPKLRALKMGQVIREDGPQTHQRKSGTPTMGGLLVVPVGLIIGSFVSVNGESSEQLLALSWITLAYMLIGGFDDWRSLTRGTNTGLTPRGKLLLQTAASLIFLAWAGWQHWIDSSIALPLGISIQMGFMIWPLALFVFLAESNATNLTDGLDGLASGCGALVFTGLAVQLMLRGNDGNPVLAGFCMAMAGAWLGFLMHNRNPAQVFMGDTGSLAMGAALSGVAILSNSLWPLLVMGGVFLAESLSVIIQVWVFKATKGPDGVGRRVFRMAPLHHHYEIGGTDEQMVVRRFWLSTGGLVLLGLLLRPTA</sequence>